<protein>
    <recommendedName>
        <fullName>Methenyltetrahydrofolate synthase domain-containing protein</fullName>
    </recommendedName>
</protein>
<evidence type="ECO:0000255" key="1">
    <source>
        <dbReference type="PROSITE-ProRule" id="PRU00176"/>
    </source>
</evidence>
<evidence type="ECO:0000256" key="2">
    <source>
        <dbReference type="SAM" id="MobiDB-lite"/>
    </source>
</evidence>
<evidence type="ECO:0000269" key="3">
    <source>
    </source>
</evidence>
<evidence type="ECO:0000269" key="4">
    <source>
    </source>
</evidence>
<evidence type="ECO:0000269" key="5">
    <source ref="3"/>
</evidence>
<evidence type="ECO:0000303" key="6">
    <source>
    </source>
</evidence>
<evidence type="ECO:0000303" key="7">
    <source>
    </source>
</evidence>
<evidence type="ECO:0000305" key="8"/>
<evidence type="ECO:0007829" key="9">
    <source>
        <dbReference type="PDB" id="2E5J"/>
    </source>
</evidence>
<sequence length="383" mass="42173">MEPRAVGVSKQDIREQIWGYMESQNLADFPRPVHHRIPNFKGSYLACQNIKDLDVFARTQEVKVDPDKPLEGVRLLVLQSKKTLLVPTPRLRTGLFNKITPPPGATKDILRKCATSQGVRNYSVPIGLDSRVLVDLVVVGSVAVSEKGWRIGKGEGYADLEYAMMVSMGAVSKETPVVTIVHDCQVVDIPEELVEEHDITVDYILTPTRVIATGCKRPKPMGITWFKISLEMMEKIPILRSLRAREQQAGKDVTLQGEHQHLPEPGCQQTVPLSVGRRPPDTPGPETNSMEAAPGSPPGEGAPLAADVYVGNLPGDARVSDLKRALRELGSVPLRLTWQGPRRRAFLHYPDSAAAQQAVSCLQGLRLGTDTLRVALARQQRDK</sequence>
<comment type="alternative products">
    <event type="alternative splicing"/>
    <isoform>
        <id>Q2M296-1</id>
        <name>1</name>
        <sequence type="displayed"/>
    </isoform>
    <isoform>
        <id>Q2M296-2</id>
        <name>2</name>
        <sequence type="described" ref="VSP_027115"/>
    </isoform>
    <isoform>
        <id>Q2M296-3</id>
        <name>3</name>
        <sequence type="described" ref="VSP_044492"/>
    </isoform>
    <isoform>
        <id>Q2M296-4</id>
        <name>4</name>
        <sequence type="described" ref="VSP_027115 VSP_044492"/>
    </isoform>
</comment>
<comment type="sequence caution" evidence="8">
    <conflict type="frameshift">
        <sequence resource="EMBL-CDS" id="BAB14383"/>
    </conflict>
</comment>
<dbReference type="EMBL" id="AK023060">
    <property type="protein sequence ID" value="BAB14383.1"/>
    <property type="status" value="ALT_FRAME"/>
    <property type="molecule type" value="mRNA"/>
</dbReference>
<dbReference type="EMBL" id="AK023955">
    <property type="protein sequence ID" value="BAB14739.1"/>
    <property type="molecule type" value="mRNA"/>
</dbReference>
<dbReference type="EMBL" id="AC009108">
    <property type="status" value="NOT_ANNOTATED_CDS"/>
    <property type="molecule type" value="Genomic_DNA"/>
</dbReference>
<dbReference type="EMBL" id="CH471114">
    <property type="protein sequence ID" value="EAW95418.1"/>
    <property type="molecule type" value="Genomic_DNA"/>
</dbReference>
<dbReference type="EMBL" id="CH471114">
    <property type="protein sequence ID" value="EAW95419.1"/>
    <property type="molecule type" value="Genomic_DNA"/>
</dbReference>
<dbReference type="EMBL" id="BC112057">
    <property type="protein sequence ID" value="AAI12058.1"/>
    <property type="molecule type" value="mRNA"/>
</dbReference>
<dbReference type="EMBL" id="BC112059">
    <property type="protein sequence ID" value="AAI12060.1"/>
    <property type="molecule type" value="mRNA"/>
</dbReference>
<dbReference type="EMBL" id="BC143702">
    <property type="protein sequence ID" value="AAI43703.1"/>
    <property type="molecule type" value="mRNA"/>
</dbReference>
<dbReference type="EMBL" id="BC143707">
    <property type="protein sequence ID" value="AAI43708.1"/>
    <property type="molecule type" value="mRNA"/>
</dbReference>
<dbReference type="CCDS" id="CCDS42211.1">
    <molecule id="Q2M296-2"/>
</dbReference>
<dbReference type="CCDS" id="CCDS54047.1">
    <molecule id="Q2M296-1"/>
</dbReference>
<dbReference type="CCDS" id="CCDS54048.1">
    <molecule id="Q2M296-3"/>
</dbReference>
<dbReference type="CCDS" id="CCDS58490.1">
    <molecule id="Q2M296-4"/>
</dbReference>
<dbReference type="RefSeq" id="NP_001152849.1">
    <molecule id="Q2M296-1"/>
    <property type="nucleotide sequence ID" value="NM_001159377.2"/>
</dbReference>
<dbReference type="RefSeq" id="NP_001152850.1">
    <molecule id="Q2M296-3"/>
    <property type="nucleotide sequence ID" value="NM_001159378.2"/>
</dbReference>
<dbReference type="RefSeq" id="NP_001152851.1">
    <molecule id="Q2M296-4"/>
    <property type="nucleotide sequence ID" value="NM_001159379.2"/>
</dbReference>
<dbReference type="RefSeq" id="NP_073601.2">
    <molecule id="Q2M296-2"/>
    <property type="nucleotide sequence ID" value="NM_022764.3"/>
</dbReference>
<dbReference type="PDB" id="2E5J">
    <property type="method" value="NMR"/>
    <property type="chains" value="A=294-383"/>
</dbReference>
<dbReference type="PDBsum" id="2E5J"/>
<dbReference type="SMR" id="Q2M296"/>
<dbReference type="BioGRID" id="122289">
    <property type="interactions" value="12"/>
</dbReference>
<dbReference type="FunCoup" id="Q2M296">
    <property type="interactions" value="1608"/>
</dbReference>
<dbReference type="IntAct" id="Q2M296">
    <property type="interactions" value="5"/>
</dbReference>
<dbReference type="STRING" id="9606.ENSP00000354152"/>
<dbReference type="iPTMnet" id="Q2M296"/>
<dbReference type="PhosphoSitePlus" id="Q2M296"/>
<dbReference type="BioMuta" id="MTHFSD"/>
<dbReference type="DMDM" id="209572652"/>
<dbReference type="jPOST" id="Q2M296"/>
<dbReference type="MassIVE" id="Q2M296"/>
<dbReference type="PaxDb" id="9606-ENSP00000354152"/>
<dbReference type="PeptideAtlas" id="Q2M296"/>
<dbReference type="ProteomicsDB" id="19045"/>
<dbReference type="ProteomicsDB" id="61347">
    <molecule id="Q2M296-1"/>
</dbReference>
<dbReference type="ProteomicsDB" id="61348">
    <molecule id="Q2M296-2"/>
</dbReference>
<dbReference type="Pumba" id="Q2M296"/>
<dbReference type="Antibodypedia" id="30664">
    <property type="antibodies" value="115 antibodies from 20 providers"/>
</dbReference>
<dbReference type="DNASU" id="64779"/>
<dbReference type="Ensembl" id="ENST00000360900.11">
    <molecule id="Q2M296-1"/>
    <property type="protein sequence ID" value="ENSP00000354152.6"/>
    <property type="gene ID" value="ENSG00000103248.19"/>
</dbReference>
<dbReference type="Ensembl" id="ENST00000381214.9">
    <molecule id="Q2M296-3"/>
    <property type="protein sequence ID" value="ENSP00000370612.5"/>
    <property type="gene ID" value="ENSG00000103248.19"/>
</dbReference>
<dbReference type="Ensembl" id="ENST00000543303.6">
    <molecule id="Q2M296-4"/>
    <property type="protein sequence ID" value="ENSP00000444003.2"/>
    <property type="gene ID" value="ENSG00000103248.19"/>
</dbReference>
<dbReference type="Ensembl" id="ENST00000634347.1">
    <molecule id="Q2M296-2"/>
    <property type="protein sequence ID" value="ENSP00000489295.1"/>
    <property type="gene ID" value="ENSG00000103248.19"/>
</dbReference>
<dbReference type="GeneID" id="64779"/>
<dbReference type="KEGG" id="hsa:64779"/>
<dbReference type="MANE-Select" id="ENST00000360900.11">
    <property type="protein sequence ID" value="ENSP00000354152.6"/>
    <property type="RefSeq nucleotide sequence ID" value="NM_001159377.2"/>
    <property type="RefSeq protein sequence ID" value="NP_001152849.1"/>
</dbReference>
<dbReference type="UCSC" id="uc002fjn.4">
    <molecule id="Q2M296-1"/>
    <property type="organism name" value="human"/>
</dbReference>
<dbReference type="AGR" id="HGNC:25778"/>
<dbReference type="CTD" id="64779"/>
<dbReference type="DisGeNET" id="64779"/>
<dbReference type="GeneCards" id="MTHFSD"/>
<dbReference type="HGNC" id="HGNC:25778">
    <property type="gene designation" value="MTHFSD"/>
</dbReference>
<dbReference type="HPA" id="ENSG00000103248">
    <property type="expression patterns" value="Low tissue specificity"/>
</dbReference>
<dbReference type="neXtProt" id="NX_Q2M296"/>
<dbReference type="OpenTargets" id="ENSG00000103248"/>
<dbReference type="PharmGKB" id="PA144596408"/>
<dbReference type="VEuPathDB" id="HostDB:ENSG00000103248"/>
<dbReference type="eggNOG" id="KOG4410">
    <property type="taxonomic scope" value="Eukaryota"/>
</dbReference>
<dbReference type="GeneTree" id="ENSGT00390000011730"/>
<dbReference type="HOGENOM" id="CLU_031500_3_0_1"/>
<dbReference type="InParanoid" id="Q2M296"/>
<dbReference type="OMA" id="NPMSITW"/>
<dbReference type="OrthoDB" id="433414at2759"/>
<dbReference type="PAN-GO" id="Q2M296">
    <property type="GO annotations" value="1 GO annotation based on evolutionary models"/>
</dbReference>
<dbReference type="PhylomeDB" id="Q2M296"/>
<dbReference type="TreeFam" id="TF324742"/>
<dbReference type="PathwayCommons" id="Q2M296"/>
<dbReference type="SignaLink" id="Q2M296"/>
<dbReference type="BioGRID-ORCS" id="64779">
    <property type="hits" value="13 hits in 1154 CRISPR screens"/>
</dbReference>
<dbReference type="EvolutionaryTrace" id="Q2M296"/>
<dbReference type="GenomeRNAi" id="64779"/>
<dbReference type="Pharos" id="Q2M296">
    <property type="development level" value="Tdark"/>
</dbReference>
<dbReference type="PRO" id="PR:Q2M296"/>
<dbReference type="Proteomes" id="UP000005640">
    <property type="component" value="Chromosome 16"/>
</dbReference>
<dbReference type="RNAct" id="Q2M296">
    <property type="molecule type" value="protein"/>
</dbReference>
<dbReference type="Bgee" id="ENSG00000103248">
    <property type="expression patterns" value="Expressed in buccal mucosa cell and 133 other cell types or tissues"/>
</dbReference>
<dbReference type="ExpressionAtlas" id="Q2M296">
    <property type="expression patterns" value="baseline and differential"/>
</dbReference>
<dbReference type="GO" id="GO:0005737">
    <property type="term" value="C:cytoplasm"/>
    <property type="evidence" value="ECO:0000318"/>
    <property type="project" value="GO_Central"/>
</dbReference>
<dbReference type="GO" id="GO:0003723">
    <property type="term" value="F:RNA binding"/>
    <property type="evidence" value="ECO:0007005"/>
    <property type="project" value="UniProtKB"/>
</dbReference>
<dbReference type="CDD" id="cd12270">
    <property type="entry name" value="RRM_MTHFSD"/>
    <property type="match status" value="1"/>
</dbReference>
<dbReference type="FunFam" id="3.40.50.10420:FF:000001">
    <property type="entry name" value="Methenyltetrahydrofolate synthase domain-containing protein"/>
    <property type="match status" value="1"/>
</dbReference>
<dbReference type="FunFam" id="3.30.70.330:FF:000393">
    <property type="entry name" value="Methenyltetrahydrofolate synthetase domain containing"/>
    <property type="match status" value="1"/>
</dbReference>
<dbReference type="Gene3D" id="3.30.70.330">
    <property type="match status" value="1"/>
</dbReference>
<dbReference type="Gene3D" id="3.40.50.10420">
    <property type="entry name" value="NagB/RpiA/CoA transferase-like"/>
    <property type="match status" value="1"/>
</dbReference>
<dbReference type="InterPro" id="IPR002698">
    <property type="entry name" value="FTHF_cligase"/>
</dbReference>
<dbReference type="InterPro" id="IPR024185">
    <property type="entry name" value="FTHF_cligase-like_sf"/>
</dbReference>
<dbReference type="InterPro" id="IPR034359">
    <property type="entry name" value="MTHFSD_RRM"/>
</dbReference>
<dbReference type="InterPro" id="IPR037171">
    <property type="entry name" value="NagB/RpiA_transferase-like"/>
</dbReference>
<dbReference type="InterPro" id="IPR012677">
    <property type="entry name" value="Nucleotide-bd_a/b_plait_sf"/>
</dbReference>
<dbReference type="InterPro" id="IPR035979">
    <property type="entry name" value="RBD_domain_sf"/>
</dbReference>
<dbReference type="InterPro" id="IPR000504">
    <property type="entry name" value="RRM_dom"/>
</dbReference>
<dbReference type="PANTHER" id="PTHR13017">
    <property type="entry name" value="5-FORMYLTETRAHYDROFOLATE CYCLO-LIGASE-RELATED"/>
    <property type="match status" value="1"/>
</dbReference>
<dbReference type="PANTHER" id="PTHR13017:SF0">
    <property type="entry name" value="METHENYLTETRAHYDROFOLATE SYNTHASE DOMAIN-CONTAINING PROTEIN"/>
    <property type="match status" value="1"/>
</dbReference>
<dbReference type="Pfam" id="PF01812">
    <property type="entry name" value="5-FTHF_cyc-lig"/>
    <property type="match status" value="1"/>
</dbReference>
<dbReference type="Pfam" id="PF00076">
    <property type="entry name" value="RRM_1"/>
    <property type="match status" value="1"/>
</dbReference>
<dbReference type="SMART" id="SM00360">
    <property type="entry name" value="RRM"/>
    <property type="match status" value="1"/>
</dbReference>
<dbReference type="SUPFAM" id="SSF100950">
    <property type="entry name" value="NagB/RpiA/CoA transferase-like"/>
    <property type="match status" value="1"/>
</dbReference>
<dbReference type="SUPFAM" id="SSF54928">
    <property type="entry name" value="RNA-binding domain, RBD"/>
    <property type="match status" value="1"/>
</dbReference>
<dbReference type="PROSITE" id="PS50102">
    <property type="entry name" value="RRM"/>
    <property type="match status" value="1"/>
</dbReference>
<keyword id="KW-0002">3D-structure</keyword>
<keyword id="KW-0025">Alternative splicing</keyword>
<keyword id="KW-1267">Proteomics identification</keyword>
<keyword id="KW-1185">Reference proteome</keyword>
<keyword id="KW-0694">RNA-binding</keyword>
<name>MTHSD_HUMAN</name>
<reference key="1">
    <citation type="journal article" date="2004" name="Nat. Genet.">
        <title>Complete sequencing and characterization of 21,243 full-length human cDNAs.</title>
        <authorList>
            <person name="Ota T."/>
            <person name="Suzuki Y."/>
            <person name="Nishikawa T."/>
            <person name="Otsuki T."/>
            <person name="Sugiyama T."/>
            <person name="Irie R."/>
            <person name="Wakamatsu A."/>
            <person name="Hayashi K."/>
            <person name="Sato H."/>
            <person name="Nagai K."/>
            <person name="Kimura K."/>
            <person name="Makita H."/>
            <person name="Sekine M."/>
            <person name="Obayashi M."/>
            <person name="Nishi T."/>
            <person name="Shibahara T."/>
            <person name="Tanaka T."/>
            <person name="Ishii S."/>
            <person name="Yamamoto J."/>
            <person name="Saito K."/>
            <person name="Kawai Y."/>
            <person name="Isono Y."/>
            <person name="Nakamura Y."/>
            <person name="Nagahari K."/>
            <person name="Murakami K."/>
            <person name="Yasuda T."/>
            <person name="Iwayanagi T."/>
            <person name="Wagatsuma M."/>
            <person name="Shiratori A."/>
            <person name="Sudo H."/>
            <person name="Hosoiri T."/>
            <person name="Kaku Y."/>
            <person name="Kodaira H."/>
            <person name="Kondo H."/>
            <person name="Sugawara M."/>
            <person name="Takahashi M."/>
            <person name="Kanda K."/>
            <person name="Yokoi T."/>
            <person name="Furuya T."/>
            <person name="Kikkawa E."/>
            <person name="Omura Y."/>
            <person name="Abe K."/>
            <person name="Kamihara K."/>
            <person name="Katsuta N."/>
            <person name="Sato K."/>
            <person name="Tanikawa M."/>
            <person name="Yamazaki M."/>
            <person name="Ninomiya K."/>
            <person name="Ishibashi T."/>
            <person name="Yamashita H."/>
            <person name="Murakawa K."/>
            <person name="Fujimori K."/>
            <person name="Tanai H."/>
            <person name="Kimata M."/>
            <person name="Watanabe M."/>
            <person name="Hiraoka S."/>
            <person name="Chiba Y."/>
            <person name="Ishida S."/>
            <person name="Ono Y."/>
            <person name="Takiguchi S."/>
            <person name="Watanabe S."/>
            <person name="Yosida M."/>
            <person name="Hotuta T."/>
            <person name="Kusano J."/>
            <person name="Kanehori K."/>
            <person name="Takahashi-Fujii A."/>
            <person name="Hara H."/>
            <person name="Tanase T.-O."/>
            <person name="Nomura Y."/>
            <person name="Togiya S."/>
            <person name="Komai F."/>
            <person name="Hara R."/>
            <person name="Takeuchi K."/>
            <person name="Arita M."/>
            <person name="Imose N."/>
            <person name="Musashino K."/>
            <person name="Yuuki H."/>
            <person name="Oshima A."/>
            <person name="Sasaki N."/>
            <person name="Aotsuka S."/>
            <person name="Yoshikawa Y."/>
            <person name="Matsunawa H."/>
            <person name="Ichihara T."/>
            <person name="Shiohata N."/>
            <person name="Sano S."/>
            <person name="Moriya S."/>
            <person name="Momiyama H."/>
            <person name="Satoh N."/>
            <person name="Takami S."/>
            <person name="Terashima Y."/>
            <person name="Suzuki O."/>
            <person name="Nakagawa S."/>
            <person name="Senoh A."/>
            <person name="Mizoguchi H."/>
            <person name="Goto Y."/>
            <person name="Shimizu F."/>
            <person name="Wakebe H."/>
            <person name="Hishigaki H."/>
            <person name="Watanabe T."/>
            <person name="Sugiyama A."/>
            <person name="Takemoto M."/>
            <person name="Kawakami B."/>
            <person name="Yamazaki M."/>
            <person name="Watanabe K."/>
            <person name="Kumagai A."/>
            <person name="Itakura S."/>
            <person name="Fukuzumi Y."/>
            <person name="Fujimori Y."/>
            <person name="Komiyama M."/>
            <person name="Tashiro H."/>
            <person name="Tanigami A."/>
            <person name="Fujiwara T."/>
            <person name="Ono T."/>
            <person name="Yamada K."/>
            <person name="Fujii Y."/>
            <person name="Ozaki K."/>
            <person name="Hirao M."/>
            <person name="Ohmori Y."/>
            <person name="Kawabata A."/>
            <person name="Hikiji T."/>
            <person name="Kobatake N."/>
            <person name="Inagaki H."/>
            <person name="Ikema Y."/>
            <person name="Okamoto S."/>
            <person name="Okitani R."/>
            <person name="Kawakami T."/>
            <person name="Noguchi S."/>
            <person name="Itoh T."/>
            <person name="Shigeta K."/>
            <person name="Senba T."/>
            <person name="Matsumura K."/>
            <person name="Nakajima Y."/>
            <person name="Mizuno T."/>
            <person name="Morinaga M."/>
            <person name="Sasaki M."/>
            <person name="Togashi T."/>
            <person name="Oyama M."/>
            <person name="Hata H."/>
            <person name="Watanabe M."/>
            <person name="Komatsu T."/>
            <person name="Mizushima-Sugano J."/>
            <person name="Satoh T."/>
            <person name="Shirai Y."/>
            <person name="Takahashi Y."/>
            <person name="Nakagawa K."/>
            <person name="Okumura K."/>
            <person name="Nagase T."/>
            <person name="Nomura N."/>
            <person name="Kikuchi H."/>
            <person name="Masuho Y."/>
            <person name="Yamashita R."/>
            <person name="Nakai K."/>
            <person name="Yada T."/>
            <person name="Nakamura Y."/>
            <person name="Ohara O."/>
            <person name="Isogai T."/>
            <person name="Sugano S."/>
        </authorList>
    </citation>
    <scope>NUCLEOTIDE SEQUENCE [LARGE SCALE MRNA] (ISOFORMS 1 AND 2)</scope>
    <scope>VARIANT ARG-315</scope>
    <source>
        <tissue>Thyroid</tissue>
    </source>
</reference>
<reference key="2">
    <citation type="journal article" date="2004" name="Nature">
        <title>The sequence and analysis of duplication-rich human chromosome 16.</title>
        <authorList>
            <person name="Martin J."/>
            <person name="Han C."/>
            <person name="Gordon L.A."/>
            <person name="Terry A."/>
            <person name="Prabhakar S."/>
            <person name="She X."/>
            <person name="Xie G."/>
            <person name="Hellsten U."/>
            <person name="Chan Y.M."/>
            <person name="Altherr M."/>
            <person name="Couronne O."/>
            <person name="Aerts A."/>
            <person name="Bajorek E."/>
            <person name="Black S."/>
            <person name="Blumer H."/>
            <person name="Branscomb E."/>
            <person name="Brown N.C."/>
            <person name="Bruno W.J."/>
            <person name="Buckingham J.M."/>
            <person name="Callen D.F."/>
            <person name="Campbell C.S."/>
            <person name="Campbell M.L."/>
            <person name="Campbell E.W."/>
            <person name="Caoile C."/>
            <person name="Challacombe J.F."/>
            <person name="Chasteen L.A."/>
            <person name="Chertkov O."/>
            <person name="Chi H.C."/>
            <person name="Christensen M."/>
            <person name="Clark L.M."/>
            <person name="Cohn J.D."/>
            <person name="Denys M."/>
            <person name="Detter J.C."/>
            <person name="Dickson M."/>
            <person name="Dimitrijevic-Bussod M."/>
            <person name="Escobar J."/>
            <person name="Fawcett J.J."/>
            <person name="Flowers D."/>
            <person name="Fotopulos D."/>
            <person name="Glavina T."/>
            <person name="Gomez M."/>
            <person name="Gonzales E."/>
            <person name="Goodstein D."/>
            <person name="Goodwin L.A."/>
            <person name="Grady D.L."/>
            <person name="Grigoriev I."/>
            <person name="Groza M."/>
            <person name="Hammon N."/>
            <person name="Hawkins T."/>
            <person name="Haydu L."/>
            <person name="Hildebrand C.E."/>
            <person name="Huang W."/>
            <person name="Israni S."/>
            <person name="Jett J."/>
            <person name="Jewett P.B."/>
            <person name="Kadner K."/>
            <person name="Kimball H."/>
            <person name="Kobayashi A."/>
            <person name="Krawczyk M.-C."/>
            <person name="Leyba T."/>
            <person name="Longmire J.L."/>
            <person name="Lopez F."/>
            <person name="Lou Y."/>
            <person name="Lowry S."/>
            <person name="Ludeman T."/>
            <person name="Manohar C.F."/>
            <person name="Mark G.A."/>
            <person name="McMurray K.L."/>
            <person name="Meincke L.J."/>
            <person name="Morgan J."/>
            <person name="Moyzis R.K."/>
            <person name="Mundt M.O."/>
            <person name="Munk A.C."/>
            <person name="Nandkeshwar R.D."/>
            <person name="Pitluck S."/>
            <person name="Pollard M."/>
            <person name="Predki P."/>
            <person name="Parson-Quintana B."/>
            <person name="Ramirez L."/>
            <person name="Rash S."/>
            <person name="Retterer J."/>
            <person name="Ricke D.O."/>
            <person name="Robinson D.L."/>
            <person name="Rodriguez A."/>
            <person name="Salamov A."/>
            <person name="Saunders E.H."/>
            <person name="Scott D."/>
            <person name="Shough T."/>
            <person name="Stallings R.L."/>
            <person name="Stalvey M."/>
            <person name="Sutherland R.D."/>
            <person name="Tapia R."/>
            <person name="Tesmer J.G."/>
            <person name="Thayer N."/>
            <person name="Thompson L.S."/>
            <person name="Tice H."/>
            <person name="Torney D.C."/>
            <person name="Tran-Gyamfi M."/>
            <person name="Tsai M."/>
            <person name="Ulanovsky L.E."/>
            <person name="Ustaszewska A."/>
            <person name="Vo N."/>
            <person name="White P.S."/>
            <person name="Williams A.L."/>
            <person name="Wills P.L."/>
            <person name="Wu J.-R."/>
            <person name="Wu K."/>
            <person name="Yang J."/>
            <person name="DeJong P."/>
            <person name="Bruce D."/>
            <person name="Doggett N.A."/>
            <person name="Deaven L."/>
            <person name="Schmutz J."/>
            <person name="Grimwood J."/>
            <person name="Richardson P."/>
            <person name="Rokhsar D.S."/>
            <person name="Eichler E.E."/>
            <person name="Gilna P."/>
            <person name="Lucas S.M."/>
            <person name="Myers R.M."/>
            <person name="Rubin E.M."/>
            <person name="Pennacchio L.A."/>
        </authorList>
    </citation>
    <scope>NUCLEOTIDE SEQUENCE [LARGE SCALE GENOMIC DNA]</scope>
</reference>
<reference key="3">
    <citation type="submission" date="2005-09" db="EMBL/GenBank/DDBJ databases">
        <authorList>
            <person name="Mural R.J."/>
            <person name="Istrail S."/>
            <person name="Sutton G.G."/>
            <person name="Florea L."/>
            <person name="Halpern A.L."/>
            <person name="Mobarry C.M."/>
            <person name="Lippert R."/>
            <person name="Walenz B."/>
            <person name="Shatkay H."/>
            <person name="Dew I."/>
            <person name="Miller J.R."/>
            <person name="Flanigan M.J."/>
            <person name="Edwards N.J."/>
            <person name="Bolanos R."/>
            <person name="Fasulo D."/>
            <person name="Halldorsson B.V."/>
            <person name="Hannenhalli S."/>
            <person name="Turner R."/>
            <person name="Yooseph S."/>
            <person name="Lu F."/>
            <person name="Nusskern D.R."/>
            <person name="Shue B.C."/>
            <person name="Zheng X.H."/>
            <person name="Zhong F."/>
            <person name="Delcher A.L."/>
            <person name="Huson D.H."/>
            <person name="Kravitz S.A."/>
            <person name="Mouchard L."/>
            <person name="Reinert K."/>
            <person name="Remington K.A."/>
            <person name="Clark A.G."/>
            <person name="Waterman M.S."/>
            <person name="Eichler E.E."/>
            <person name="Adams M.D."/>
            <person name="Hunkapiller M.W."/>
            <person name="Myers E.W."/>
            <person name="Venter J.C."/>
        </authorList>
    </citation>
    <scope>NUCLEOTIDE SEQUENCE [LARGE SCALE GENOMIC DNA]</scope>
    <scope>VARIANT ARG-315</scope>
</reference>
<reference key="4">
    <citation type="journal article" date="2004" name="Genome Res.">
        <title>The status, quality, and expansion of the NIH full-length cDNA project: the Mammalian Gene Collection (MGC).</title>
        <authorList>
            <consortium name="The MGC Project Team"/>
        </authorList>
    </citation>
    <scope>NUCLEOTIDE SEQUENCE [LARGE SCALE MRNA] (ISOFORMS 1; 3 AND 4)</scope>
    <scope>VARIANTS CYS-243; THR-244 AND ARG-315</scope>
    <source>
        <tissue>Brain</tissue>
    </source>
</reference>
<reference key="5">
    <citation type="submission" date="2007-06" db="PDB data bank">
        <title>Solution structure of RNA binding domain in methenyltetrahydrofolate synthetase domain containing.</title>
        <authorList>
            <consortium name="RIKEN structural genomics initiative (RSGI)"/>
        </authorList>
    </citation>
    <scope>STRUCTURE BY NMR OF 288-383</scope>
</reference>
<proteinExistence type="evidence at protein level"/>
<accession>Q2M296</accession>
<accession>A8MQ77</accession>
<accession>B7ZLC0</accession>
<accession>B7ZLC2</accession>
<accession>D3DUM9</accession>
<accession>E9PAM1</accession>
<accession>Q9H878</accession>
<accession>Q9H954</accession>
<feature type="chain" id="PRO_0000295871" description="Methenyltetrahydrofolate synthase domain-containing protein">
    <location>
        <begin position="1"/>
        <end position="383"/>
    </location>
</feature>
<feature type="domain" description="RRM" evidence="1">
    <location>
        <begin position="306"/>
        <end position="379"/>
    </location>
</feature>
<feature type="region of interest" description="Disordered" evidence="2">
    <location>
        <begin position="249"/>
        <end position="301"/>
    </location>
</feature>
<feature type="splice variant" id="VSP_027115" description="In isoform 2 and isoform 4." evidence="6 7">
    <location>
        <position position="6"/>
    </location>
</feature>
<feature type="splice variant" id="VSP_044492" description="In isoform 3 and isoform 4." evidence="7">
    <original>SYLACQNIKDLDVFARTQEVKVDPDKPLEGVRLLVLQ</original>
    <variation>ASHAAEQLPRLQAFKTARTIKVNPDAPQKSARFFVLE</variation>
    <location>
        <begin position="43"/>
        <end position="79"/>
    </location>
</feature>
<feature type="sequence variant" id="VAR_033373" description="In dbSNP:rs34005514.">
    <original>L</original>
    <variation>V</variation>
    <location>
        <position position="45"/>
    </location>
</feature>
<feature type="sequence variant" id="VAR_068902" description="In dbSNP:rs3751800." evidence="4">
    <original>R</original>
    <variation>C</variation>
    <location>
        <position position="243"/>
    </location>
</feature>
<feature type="sequence variant" id="VAR_068903" description="In dbSNP:rs3751801." evidence="4">
    <original>A</original>
    <variation>T</variation>
    <location>
        <position position="244"/>
    </location>
</feature>
<feature type="sequence variant" id="VAR_033374" description="In dbSNP:rs3751802.">
    <original>S</original>
    <variation>C</variation>
    <location>
        <position position="296"/>
    </location>
</feature>
<feature type="sequence variant" id="VAR_033375" description="In dbSNP:rs3751803." evidence="3 4 5">
    <original>G</original>
    <variation>R</variation>
    <location>
        <position position="315"/>
    </location>
</feature>
<feature type="sequence conflict" description="In Ref. 1; BAB14383." evidence="8" ref="1">
    <original>T</original>
    <variation>A</variation>
    <location>
        <position position="59"/>
    </location>
</feature>
<feature type="sequence conflict" description="In Ref. 1; BAB14383." evidence="8" ref="1">
    <original>V</original>
    <variation>A</variation>
    <location>
        <position position="144"/>
    </location>
</feature>
<feature type="strand" evidence="9">
    <location>
        <begin position="300"/>
        <end position="302"/>
    </location>
</feature>
<feature type="strand" evidence="9">
    <location>
        <begin position="307"/>
        <end position="311"/>
    </location>
</feature>
<feature type="helix" evidence="9">
    <location>
        <begin position="319"/>
        <end position="328"/>
    </location>
</feature>
<feature type="strand" evidence="9">
    <location>
        <begin position="334"/>
        <end position="339"/>
    </location>
</feature>
<feature type="turn" evidence="9">
    <location>
        <begin position="340"/>
        <end position="343"/>
    </location>
</feature>
<feature type="strand" evidence="9">
    <location>
        <begin position="344"/>
        <end position="348"/>
    </location>
</feature>
<feature type="helix" evidence="9">
    <location>
        <begin position="352"/>
        <end position="362"/>
    </location>
</feature>
<feature type="strand" evidence="9">
    <location>
        <begin position="367"/>
        <end position="370"/>
    </location>
</feature>
<feature type="strand" evidence="9">
    <location>
        <begin position="373"/>
        <end position="376"/>
    </location>
</feature>
<gene>
    <name type="primary">MTHFSD</name>
</gene>
<organism>
    <name type="scientific">Homo sapiens</name>
    <name type="common">Human</name>
    <dbReference type="NCBI Taxonomy" id="9606"/>
    <lineage>
        <taxon>Eukaryota</taxon>
        <taxon>Metazoa</taxon>
        <taxon>Chordata</taxon>
        <taxon>Craniata</taxon>
        <taxon>Vertebrata</taxon>
        <taxon>Euteleostomi</taxon>
        <taxon>Mammalia</taxon>
        <taxon>Eutheria</taxon>
        <taxon>Euarchontoglires</taxon>
        <taxon>Primates</taxon>
        <taxon>Haplorrhini</taxon>
        <taxon>Catarrhini</taxon>
        <taxon>Hominidae</taxon>
        <taxon>Homo</taxon>
    </lineage>
</organism>